<feature type="chain" id="PRO_0000147381" description="Iron-sulfur cluster assembly SufBD family protein MTH1150 homolog">
    <location>
        <begin position="1"/>
        <end position="410"/>
    </location>
</feature>
<proteinExistence type="inferred from homology"/>
<name>YB50_METTW</name>
<sequence length="410" mass="45192">MLRDTLKKAEKARDKKALYGEDIDLERFIKEEAGEHEEVPRAREVPKKVQETLLKVGVDPEERERAGTFIQVDQSGICTTCASESIEIMGMNVALDRYSWLKDYMWKAVAVDTDKYTATTALREAEGEMGGYFIRSMPGSREVFPLQACMFIGDENVMQTAHNIIIAEENSELHIITGCATGQDVSSALHVGVSEFYLKKGAKITFTMVHNWAEQVEVRPRTGIMVGDDATYISNYILTSPVKSIQSYPTAYCTGENSRVVFQSILGGQKDSVLDMGSRVILEGRGSSAEMVSRAVSKDASQIYSRGHLAGRVPEVKGHLECHGLVLSDDSMIYAVPELEGSATELEMSHEAAVGKIAEEEVMYLTSRGLTEDEAASMIVRGFLSMDITGLPPELAAETKRMLDMSLKGM</sequence>
<evidence type="ECO:0000305" key="1"/>
<organism>
    <name type="scientific">Methanothermobacter thermautotrophicus (strain Winter)</name>
    <name type="common">Methanobacterium thermoautotrophicum</name>
    <dbReference type="NCBI Taxonomy" id="79930"/>
    <lineage>
        <taxon>Archaea</taxon>
        <taxon>Methanobacteriati</taxon>
        <taxon>Methanobacteriota</taxon>
        <taxon>Methanomada group</taxon>
        <taxon>Methanobacteria</taxon>
        <taxon>Methanobacteriales</taxon>
        <taxon>Methanobacteriaceae</taxon>
        <taxon>Methanothermobacter</taxon>
    </lineage>
</organism>
<accession>Q50519</accession>
<protein>
    <recommendedName>
        <fullName>Iron-sulfur cluster assembly SufBD family protein MTH1150 homolog</fullName>
    </recommendedName>
    <alternativeName>
        <fullName>ORF2</fullName>
    </alternativeName>
</protein>
<reference key="1">
    <citation type="journal article" date="1995" name="J. Bacteriol.">
        <title>Organization and growth phase-dependent transcription of methane genes in two regions of the Methanobacterium thermoautotrophicum genome.</title>
        <authorList>
            <person name="Noelling J."/>
            <person name="Pihl T.D."/>
            <person name="Vriesema A."/>
            <person name="Reeve J.N."/>
        </authorList>
    </citation>
    <scope>NUCLEOTIDE SEQUENCE [GENOMIC DNA]</scope>
</reference>
<dbReference type="EMBL" id="U19364">
    <property type="protein sequence ID" value="AAA87430.1"/>
    <property type="molecule type" value="Genomic_DNA"/>
</dbReference>
<dbReference type="SMR" id="Q50519"/>
<dbReference type="IntAct" id="Q50519">
    <property type="interactions" value="1"/>
</dbReference>
<dbReference type="GO" id="GO:0016226">
    <property type="term" value="P:iron-sulfur cluster assembly"/>
    <property type="evidence" value="ECO:0007669"/>
    <property type="project" value="InterPro"/>
</dbReference>
<dbReference type="InterPro" id="IPR055346">
    <property type="entry name" value="Fe-S_cluster_assembly_SufBD"/>
</dbReference>
<dbReference type="InterPro" id="IPR000825">
    <property type="entry name" value="SUF_FeS_clus_asmbl_SufBD_core"/>
</dbReference>
<dbReference type="InterPro" id="IPR037284">
    <property type="entry name" value="SUF_FeS_clus_asmbl_SufBD_sf"/>
</dbReference>
<dbReference type="PANTHER" id="PTHR30508">
    <property type="entry name" value="FES CLUSTER ASSEMBLY PROTEIN SUF"/>
    <property type="match status" value="1"/>
</dbReference>
<dbReference type="PANTHER" id="PTHR30508:SF1">
    <property type="entry name" value="UPF0051 PROTEIN ABCI8, CHLOROPLASTIC-RELATED"/>
    <property type="match status" value="1"/>
</dbReference>
<dbReference type="Pfam" id="PF01458">
    <property type="entry name" value="SUFBD_core"/>
    <property type="match status" value="1"/>
</dbReference>
<dbReference type="SUPFAM" id="SSF101960">
    <property type="entry name" value="Stabilizer of iron transporter SufD"/>
    <property type="match status" value="1"/>
</dbReference>
<comment type="similarity">
    <text evidence="1">Belongs to the iron-sulfur cluster assembly SufBD family.</text>
</comment>